<organism>
    <name type="scientific">Bacillus thuringiensis</name>
    <dbReference type="NCBI Taxonomy" id="1428"/>
    <lineage>
        <taxon>Bacteria</taxon>
        <taxon>Bacillati</taxon>
        <taxon>Bacillota</taxon>
        <taxon>Bacilli</taxon>
        <taxon>Bacillales</taxon>
        <taxon>Bacillaceae</taxon>
        <taxon>Bacillus</taxon>
        <taxon>Bacillus cereus group</taxon>
    </lineage>
</organism>
<comment type="function">
    <text evidence="2">Catalyzes hydrolysis of N-hexanoyl-(S)-homoserine lactone, but not the R-enantiomer. Hydrolyzes short- and long-chain N-acyl homoserine lactones with or without 3-oxo substitution at C3, has maximum activity on C10-AHL.</text>
</comment>
<comment type="catalytic activity">
    <reaction evidence="2">
        <text>an N-acyl-L-homoserine lactone + H2O = an N-acyl-L-homoserine + H(+)</text>
        <dbReference type="Rhea" id="RHEA:22576"/>
        <dbReference type="ChEBI" id="CHEBI:15377"/>
        <dbReference type="ChEBI" id="CHEBI:15378"/>
        <dbReference type="ChEBI" id="CHEBI:55474"/>
        <dbReference type="ChEBI" id="CHEBI:58921"/>
        <dbReference type="EC" id="3.1.1.81"/>
    </reaction>
</comment>
<comment type="cofactor">
    <cofactor evidence="2">
        <name>Zn(2+)</name>
        <dbReference type="ChEBI" id="CHEBI:29105"/>
    </cofactor>
    <text evidence="2">Binds 2 Zn(2+) ions per subunit.</text>
</comment>
<comment type="biophysicochemical properties">
    <kinetics>
        <KM evidence="2">6.7 mM for C6-(S)-HSL</KM>
    </kinetics>
</comment>
<comment type="subunit">
    <text evidence="1">Monomer.</text>
</comment>
<comment type="similarity">
    <text evidence="3">Belongs to the metallo-beta-lactamase superfamily.</text>
</comment>
<reference key="1">
    <citation type="submission" date="2003-05" db="EMBL/GenBank/DDBJ databases">
        <title>An AHL-lactonase gene from Bacillus thuringiensis KCTC 1507.</title>
        <authorList>
            <person name="Kim S.-H."/>
            <person name="Cho Y.-H."/>
        </authorList>
    </citation>
    <scope>NUCLEOTIDE SEQUENCE [GENOMIC DNA]</scope>
    <source>
        <strain>KCTC 1507</strain>
    </source>
</reference>
<reference key="2">
    <citation type="submission" date="2005-04" db="EMBL/GenBank/DDBJ databases">
        <title>Cloning of novel AHL-lactonase genes from Bacillus cereus group.</title>
        <authorList>
            <person name="Huang T."/>
            <person name="Yao F."/>
            <person name="Guan X."/>
        </authorList>
    </citation>
    <scope>NUCLEOTIDE SEQUENCE [GENOMIC DNA]</scope>
    <source>
        <strain>WB12</strain>
    </source>
</reference>
<reference key="3">
    <citation type="submission" date="2007-01" db="EMBL/GenBank/DDBJ databases">
        <title>Identification of AHL-lactonase from Colombian Bacillus thuringiensis strain.</title>
        <authorList>
            <person name="Gonzalez A."/>
            <person name="Correa E."/>
            <person name="Orduz S."/>
        </authorList>
    </citation>
    <scope>NUCLEOTIDE SEQUENCE [GENOMIC DNA]</scope>
</reference>
<reference key="4">
    <citation type="submission" date="2009-12" db="EMBL/GenBank/DDBJ databases">
        <title>Expression of homoserine lactone lactonase from Bacillus thuringiensis in E. coli.</title>
        <authorList>
            <person name="Yoon B.S."/>
            <person name="Nguyen K.T."/>
        </authorList>
    </citation>
    <scope>NUCLEOTIDE SEQUENCE [GENOMIC DNA]</scope>
    <source>
        <strain>KACC10171</strain>
        <strain>KACC10175</strain>
        <strain>KACC10180</strain>
        <strain>KACC10183</strain>
    </source>
</reference>
<reference key="5">
    <citation type="journal article" date="2005" name="Biochemistry">
        <title>The quorum-quenching lactonase from Bacillus thuringiensis is a metalloprotein.</title>
        <authorList>
            <person name="Thomas P.W."/>
            <person name="Stone E.M."/>
            <person name="Costello A.L."/>
            <person name="Tierney D.L."/>
            <person name="Fast W."/>
        </authorList>
    </citation>
    <scope>FUNCTION</scope>
    <scope>CATALYTIC ACTIVITY</scope>
    <scope>BIOPHYSICOCHEMICAL PROPERTIES</scope>
    <scope>COFACTOR</scope>
</reference>
<dbReference type="EC" id="3.1.1.81"/>
<dbReference type="EMBL" id="AY300026">
    <property type="protein sequence ID" value="AAQ73629.1"/>
    <property type="molecule type" value="Genomic_DNA"/>
</dbReference>
<dbReference type="EMBL" id="DQ000642">
    <property type="protein sequence ID" value="AAY51612.1"/>
    <property type="molecule type" value="Genomic_DNA"/>
</dbReference>
<dbReference type="EMBL" id="EF379241">
    <property type="protein sequence ID" value="ABN51242.1"/>
    <property type="molecule type" value="Genomic_DNA"/>
</dbReference>
<dbReference type="EMBL" id="GU339169">
    <property type="protein sequence ID" value="ADB96947.1"/>
    <property type="molecule type" value="Genomic_DNA"/>
</dbReference>
<dbReference type="EMBL" id="GU339170">
    <property type="protein sequence ID" value="ADB96948.1"/>
    <property type="molecule type" value="Genomic_DNA"/>
</dbReference>
<dbReference type="EMBL" id="GU339171">
    <property type="protein sequence ID" value="ADB96949.1"/>
    <property type="molecule type" value="Genomic_DNA"/>
</dbReference>
<dbReference type="EMBL" id="GU339172">
    <property type="protein sequence ID" value="ADB96950.1"/>
    <property type="molecule type" value="Genomic_DNA"/>
</dbReference>
<dbReference type="RefSeq" id="WP_000216581.1">
    <property type="nucleotide sequence ID" value="NZ_VLYZ01000154.1"/>
</dbReference>
<dbReference type="PDB" id="4J5F">
    <property type="method" value="X-ray"/>
    <property type="resolution" value="1.72 A"/>
    <property type="chains" value="A=1-250"/>
</dbReference>
<dbReference type="PDB" id="4J5H">
    <property type="method" value="X-ray"/>
    <property type="resolution" value="1.45 A"/>
    <property type="chains" value="A=1-250"/>
</dbReference>
<dbReference type="PDB" id="5EHT">
    <property type="method" value="X-ray"/>
    <property type="resolution" value="1.29 A"/>
    <property type="chains" value="A=2-250"/>
</dbReference>
<dbReference type="PDBsum" id="4J5F"/>
<dbReference type="PDBsum" id="4J5H"/>
<dbReference type="PDBsum" id="5EHT"/>
<dbReference type="SMR" id="A3FJ64"/>
<dbReference type="PATRIC" id="fig|1428.310.peg.4057"/>
<dbReference type="BRENDA" id="3.1.1.81">
    <property type="organism ID" value="711"/>
</dbReference>
<dbReference type="SABIO-RK" id="A3FJ64"/>
<dbReference type="EvolutionaryTrace" id="A3FJ64"/>
<dbReference type="GO" id="GO:0102007">
    <property type="term" value="F:acyl-L-homoserine-lactone lactonohydrolase activity"/>
    <property type="evidence" value="ECO:0007669"/>
    <property type="project" value="UniProtKB-EC"/>
</dbReference>
<dbReference type="GO" id="GO:0046872">
    <property type="term" value="F:metal ion binding"/>
    <property type="evidence" value="ECO:0007669"/>
    <property type="project" value="UniProtKB-KW"/>
</dbReference>
<dbReference type="GO" id="GO:1901335">
    <property type="term" value="P:lactone catabolic process"/>
    <property type="evidence" value="ECO:0000315"/>
    <property type="project" value="CACAO"/>
</dbReference>
<dbReference type="CDD" id="cd07729">
    <property type="entry name" value="AHL_lactonase_MBL-fold"/>
    <property type="match status" value="1"/>
</dbReference>
<dbReference type="FunFam" id="3.60.15.10:FF:000060">
    <property type="entry name" value="N-acyl homoserine lactonase AiiA"/>
    <property type="match status" value="1"/>
</dbReference>
<dbReference type="Gene3D" id="3.60.15.10">
    <property type="entry name" value="Ribonuclease Z/Hydroxyacylglutathione hydrolase-like"/>
    <property type="match status" value="1"/>
</dbReference>
<dbReference type="InterPro" id="IPR054870">
    <property type="entry name" value="AHLLactAiiA"/>
</dbReference>
<dbReference type="InterPro" id="IPR051013">
    <property type="entry name" value="MBL_superfamily_lactonases"/>
</dbReference>
<dbReference type="InterPro" id="IPR001279">
    <property type="entry name" value="Metallo-B-lactamas"/>
</dbReference>
<dbReference type="InterPro" id="IPR036866">
    <property type="entry name" value="RibonucZ/Hydroxyglut_hydro"/>
</dbReference>
<dbReference type="NCBIfam" id="NF045699">
    <property type="entry name" value="AHLLactAiiA"/>
    <property type="match status" value="1"/>
</dbReference>
<dbReference type="PANTHER" id="PTHR42978:SF7">
    <property type="entry name" value="METALLO-HYDROLASE RV2300C-RELATED"/>
    <property type="match status" value="1"/>
</dbReference>
<dbReference type="PANTHER" id="PTHR42978">
    <property type="entry name" value="QUORUM-QUENCHING LACTONASE YTNP-RELATED-RELATED"/>
    <property type="match status" value="1"/>
</dbReference>
<dbReference type="Pfam" id="PF00753">
    <property type="entry name" value="Lactamase_B"/>
    <property type="match status" value="1"/>
</dbReference>
<dbReference type="SMART" id="SM00849">
    <property type="entry name" value="Lactamase_B"/>
    <property type="match status" value="1"/>
</dbReference>
<dbReference type="SUPFAM" id="SSF56281">
    <property type="entry name" value="Metallo-hydrolase/oxidoreductase"/>
    <property type="match status" value="1"/>
</dbReference>
<accession>A3FJ64</accession>
<accession>D3JZ16</accession>
<accession>Q1WNZ4</accession>
<accession>Q6JVJ7</accession>
<accession>Q7B8B9</accession>
<accession>Q8RPW7</accession>
<accession>Q8RPW8</accession>
<proteinExistence type="evidence at protein level"/>
<feature type="chain" id="PRO_0000403302" description="N-acyl homoserine lactonase">
    <location>
        <begin position="1"/>
        <end position="250"/>
    </location>
</feature>
<feature type="binding site" evidence="1">
    <location>
        <position position="104"/>
    </location>
    <ligand>
        <name>Zn(2+)</name>
        <dbReference type="ChEBI" id="CHEBI:29105"/>
        <label>1</label>
    </ligand>
</feature>
<feature type="binding site" evidence="1">
    <location>
        <position position="106"/>
    </location>
    <ligand>
        <name>Zn(2+)</name>
        <dbReference type="ChEBI" id="CHEBI:29105"/>
        <label>1</label>
    </ligand>
</feature>
<feature type="binding site" evidence="1">
    <location>
        <position position="108"/>
    </location>
    <ligand>
        <name>Zn(2+)</name>
        <dbReference type="ChEBI" id="CHEBI:29105"/>
        <label>2</label>
    </ligand>
</feature>
<feature type="binding site" evidence="1">
    <location>
        <position position="109"/>
    </location>
    <ligand>
        <name>Zn(2+)</name>
        <dbReference type="ChEBI" id="CHEBI:29105"/>
        <label>2</label>
    </ligand>
</feature>
<feature type="binding site" evidence="1">
    <location>
        <position position="169"/>
    </location>
    <ligand>
        <name>Zn(2+)</name>
        <dbReference type="ChEBI" id="CHEBI:29105"/>
        <label>1</label>
    </ligand>
</feature>
<feature type="binding site" evidence="1">
    <location>
        <position position="191"/>
    </location>
    <ligand>
        <name>Zn(2+)</name>
        <dbReference type="ChEBI" id="CHEBI:29105"/>
        <label>1</label>
    </ligand>
</feature>
<feature type="binding site" evidence="1">
    <location>
        <position position="191"/>
    </location>
    <ligand>
        <name>Zn(2+)</name>
        <dbReference type="ChEBI" id="CHEBI:29105"/>
        <label>2</label>
    </ligand>
</feature>
<feature type="binding site" evidence="1">
    <location>
        <position position="235"/>
    </location>
    <ligand>
        <name>Zn(2+)</name>
        <dbReference type="ChEBI" id="CHEBI:29105"/>
        <label>2</label>
    </ligand>
</feature>
<feature type="sequence conflict" description="In Ref. 1; AAQ73629 and 3; ABN51242." evidence="3" ref="1 3">
    <original>I</original>
    <variation>V</variation>
    <location>
        <position position="9"/>
    </location>
</feature>
<feature type="sequence conflict" description="In Ref. 4; ADB96950." evidence="3" ref="4">
    <original>P</original>
    <variation>L</variation>
    <location>
        <position position="54"/>
    </location>
</feature>
<feature type="sequence conflict" description="In Ref. 4; ADB96950." evidence="3" ref="4">
    <original>K</original>
    <variation>E</variation>
    <location>
        <position position="139"/>
    </location>
</feature>
<feature type="sequence conflict" description="In Ref. 1; AAQ73629." evidence="3" ref="1">
    <original>E</original>
    <variation>G</variation>
    <location>
        <position position="240"/>
    </location>
</feature>
<feature type="sequence conflict" description="In Ref. 2; AAY51612." evidence="3" ref="2">
    <original>V</original>
    <variation>A</variation>
    <location>
        <position position="245"/>
    </location>
</feature>
<feature type="strand" evidence="4">
    <location>
        <begin position="2"/>
        <end position="17"/>
    </location>
</feature>
<feature type="helix" evidence="4">
    <location>
        <begin position="18"/>
        <end position="20"/>
    </location>
</feature>
<feature type="strand" evidence="4">
    <location>
        <begin position="30"/>
        <end position="42"/>
    </location>
</feature>
<feature type="strand" evidence="4">
    <location>
        <begin position="45"/>
        <end position="49"/>
    </location>
</feature>
<feature type="helix" evidence="4">
    <location>
        <begin position="55"/>
        <end position="57"/>
    </location>
</feature>
<feature type="turn" evidence="4">
    <location>
        <begin position="61"/>
        <end position="66"/>
    </location>
</feature>
<feature type="turn" evidence="4">
    <location>
        <begin position="68"/>
        <end position="72"/>
    </location>
</feature>
<feature type="strand" evidence="4">
    <location>
        <begin position="73"/>
        <end position="77"/>
    </location>
</feature>
<feature type="helix" evidence="4">
    <location>
        <begin position="79"/>
        <end position="81"/>
    </location>
</feature>
<feature type="helix" evidence="4">
    <location>
        <begin position="83"/>
        <end position="90"/>
    </location>
</feature>
<feature type="helix" evidence="4">
    <location>
        <begin position="94"/>
        <end position="96"/>
    </location>
</feature>
<feature type="strand" evidence="4">
    <location>
        <begin position="98"/>
        <end position="101"/>
    </location>
</feature>
<feature type="helix" evidence="4">
    <location>
        <begin position="107"/>
        <end position="110"/>
    </location>
</feature>
<feature type="helix" evidence="4">
    <location>
        <begin position="113"/>
        <end position="115"/>
    </location>
</feature>
<feature type="strand" evidence="4">
    <location>
        <begin position="117"/>
        <end position="119"/>
    </location>
</feature>
<feature type="strand" evidence="4">
    <location>
        <begin position="121"/>
        <end position="124"/>
    </location>
</feature>
<feature type="helix" evidence="4">
    <location>
        <begin position="125"/>
        <end position="131"/>
    </location>
</feature>
<feature type="helix" evidence="4">
    <location>
        <begin position="139"/>
        <end position="141"/>
    </location>
</feature>
<feature type="strand" evidence="4">
    <location>
        <begin position="148"/>
        <end position="151"/>
    </location>
</feature>
<feature type="strand" evidence="4">
    <location>
        <begin position="153"/>
        <end position="158"/>
    </location>
</feature>
<feature type="strand" evidence="4">
    <location>
        <begin position="161"/>
        <end position="165"/>
    </location>
</feature>
<feature type="strand" evidence="4">
    <location>
        <begin position="168"/>
        <end position="170"/>
    </location>
</feature>
<feature type="strand" evidence="4">
    <location>
        <begin position="174"/>
        <end position="180"/>
    </location>
</feature>
<feature type="turn" evidence="4">
    <location>
        <begin position="181"/>
        <end position="183"/>
    </location>
</feature>
<feature type="strand" evidence="4">
    <location>
        <begin position="184"/>
        <end position="190"/>
    </location>
</feature>
<feature type="helix" evidence="4">
    <location>
        <begin position="196"/>
        <end position="200"/>
    </location>
</feature>
<feature type="helix" evidence="4">
    <location>
        <begin position="210"/>
        <end position="227"/>
    </location>
</feature>
<feature type="strand" evidence="4">
    <location>
        <begin position="230"/>
        <end position="235"/>
    </location>
</feature>
<feature type="helix" evidence="4">
    <location>
        <begin position="237"/>
        <end position="240"/>
    </location>
</feature>
<keyword id="KW-0002">3D-structure</keyword>
<keyword id="KW-0378">Hydrolase</keyword>
<keyword id="KW-0479">Metal-binding</keyword>
<keyword id="KW-0862">Zinc</keyword>
<protein>
    <recommendedName>
        <fullName>N-acyl homoserine lactonase</fullName>
        <shortName>AHL-lactonase</shortName>
        <ecNumber>3.1.1.81</ecNumber>
    </recommendedName>
    <alternativeName>
        <fullName>Homoserine lactone lactonase</fullName>
    </alternativeName>
</protein>
<name>AHLL_BACTU</name>
<evidence type="ECO:0000250" key="1"/>
<evidence type="ECO:0000269" key="2">
    <source>
    </source>
</evidence>
<evidence type="ECO:0000305" key="3"/>
<evidence type="ECO:0007829" key="4">
    <source>
        <dbReference type="PDB" id="5EHT"/>
    </source>
</evidence>
<gene>
    <name type="primary">aiiA</name>
</gene>
<sequence length="250" mass="28220">MTVKKLYFIPAGRCMLDHSSVNSALTPGKLLNLPVWCYLLETEEGPILVDTGMPESAVNNEGLFNGTFVEGQILPKMTEEDRIVNILKRVGYEPDDLLYIISSHLHFDHAGGNGAFTNTPIIVQRTEYEAALHREEYMKECILPHLNYKIIEGDYEVVPGVQLLYTPGHSPGHQSLFIETEQSGSVLLTIDASYTKENFEDEVPFAGFDPELALSSIKRLKEVVKKEKPIIFFGHDIEQEKSCRVFPEYI</sequence>